<sequence length="231" mass="26036">MVKLVFARHGESEWNKANLFTGWADVDLSEKGTQQAIDAGKLIKEAGIEFDLAFTSVLTRAIKTTNLALENAGQLWVPTEKSWRLNERHYGALTGKNKAEAAEQFGDEQVHIWRRSYDVLPPAMAKDDEYSAHKDRRYADLDPALIPDAENLKVTLERAMPYWEEKIAPALLDGKNVFVGAHGNSIRALVKHIKGLSDDEIMDVEIPNFPPLVFELDEKLNIVKEYYLGGE</sequence>
<name>GPMA_STRP6</name>
<proteinExistence type="evidence at protein level"/>
<organism>
    <name type="scientific">Streptococcus pyogenes serotype M6 (strain ATCC BAA-946 / MGAS10394)</name>
    <dbReference type="NCBI Taxonomy" id="286636"/>
    <lineage>
        <taxon>Bacteria</taxon>
        <taxon>Bacillati</taxon>
        <taxon>Bacillota</taxon>
        <taxon>Bacilli</taxon>
        <taxon>Lactobacillales</taxon>
        <taxon>Streptococcaceae</taxon>
        <taxon>Streptococcus</taxon>
    </lineage>
</organism>
<evidence type="ECO:0000255" key="1">
    <source>
        <dbReference type="HAMAP-Rule" id="MF_01039"/>
    </source>
</evidence>
<evidence type="ECO:0000269" key="2">
    <source ref="2"/>
</evidence>
<feature type="chain" id="PRO_0000179929" description="2,3-bisphosphoglycerate-dependent phosphoglycerate mutase">
    <location>
        <begin position="1"/>
        <end position="231"/>
    </location>
</feature>
<feature type="active site" description="Tele-phosphohistidine intermediate" evidence="1">
    <location>
        <position position="9"/>
    </location>
</feature>
<feature type="active site" description="Proton donor/acceptor" evidence="1">
    <location>
        <position position="87"/>
    </location>
</feature>
<feature type="binding site" evidence="1">
    <location>
        <begin position="8"/>
        <end position="15"/>
    </location>
    <ligand>
        <name>substrate</name>
    </ligand>
</feature>
<feature type="binding site" evidence="1">
    <location>
        <begin position="21"/>
        <end position="22"/>
    </location>
    <ligand>
        <name>substrate</name>
    </ligand>
</feature>
<feature type="binding site" evidence="1">
    <location>
        <position position="60"/>
    </location>
    <ligand>
        <name>substrate</name>
    </ligand>
</feature>
<feature type="binding site" evidence="1">
    <location>
        <begin position="87"/>
        <end position="90"/>
    </location>
    <ligand>
        <name>substrate</name>
    </ligand>
</feature>
<feature type="binding site" evidence="1">
    <location>
        <position position="98"/>
    </location>
    <ligand>
        <name>substrate</name>
    </ligand>
</feature>
<feature type="binding site" evidence="1">
    <location>
        <begin position="114"/>
        <end position="115"/>
    </location>
    <ligand>
        <name>substrate</name>
    </ligand>
</feature>
<feature type="binding site" evidence="1">
    <location>
        <begin position="183"/>
        <end position="184"/>
    </location>
    <ligand>
        <name>substrate</name>
    </ligand>
</feature>
<feature type="site" description="Transition state stabilizer" evidence="1">
    <location>
        <position position="182"/>
    </location>
</feature>
<reference key="1">
    <citation type="journal article" date="2004" name="J. Infect. Dis.">
        <title>Progress toward characterization of the group A Streptococcus metagenome: complete genome sequence of a macrolide-resistant serotype M6 strain.</title>
        <authorList>
            <person name="Banks D.J."/>
            <person name="Porcella S.F."/>
            <person name="Barbian K.D."/>
            <person name="Beres S.B."/>
            <person name="Philips L.E."/>
            <person name="Voyich J.M."/>
            <person name="DeLeo F.R."/>
            <person name="Martin J.M."/>
            <person name="Somerville G.A."/>
            <person name="Musser J.M."/>
        </authorList>
    </citation>
    <scope>NUCLEOTIDE SEQUENCE [LARGE SCALE GENOMIC DNA]</scope>
    <source>
        <strain>ATCC BAA-946 / MGAS10394</strain>
    </source>
</reference>
<reference key="2">
    <citation type="submission" date="2000-05" db="UniProtKB">
        <title>Two-dimensional gel electrophoresis map of Streptococcus pyogenes proteins.</title>
        <authorList>
            <person name="Hogan D.A."/>
            <person name="Du P."/>
            <person name="Stevenson T.I."/>
            <person name="Whitton M."/>
            <person name="Kilby G.W."/>
            <person name="Rogers J."/>
            <person name="VanBogelen R.A."/>
        </authorList>
    </citation>
    <scope>PROTEIN SEQUENCE OF 4-8; 116-126; 138-153; 167-187 AND 220-231</scope>
    <scope>MASS SPECTROMETRY</scope>
    <source>
        <strain>JRS4 / Serotype M6</strain>
    </source>
</reference>
<protein>
    <recommendedName>
        <fullName evidence="1">2,3-bisphosphoglycerate-dependent phosphoglycerate mutase</fullName>
        <shortName evidence="1">BPG-dependent PGAM</shortName>
        <shortName evidence="1">PGAM</shortName>
        <shortName evidence="1">Phosphoglyceromutase</shortName>
        <shortName evidence="1">dPGM</shortName>
        <ecNumber evidence="1">5.4.2.11</ecNumber>
    </recommendedName>
</protein>
<gene>
    <name evidence="1" type="primary">gpmA</name>
    <name type="ordered locus">M6_Spy1190</name>
</gene>
<comment type="function">
    <text evidence="1">Catalyzes the interconversion of 2-phosphoglycerate and 3-phosphoglycerate.</text>
</comment>
<comment type="catalytic activity">
    <reaction evidence="1">
        <text>(2R)-2-phosphoglycerate = (2R)-3-phosphoglycerate</text>
        <dbReference type="Rhea" id="RHEA:15901"/>
        <dbReference type="ChEBI" id="CHEBI:58272"/>
        <dbReference type="ChEBI" id="CHEBI:58289"/>
        <dbReference type="EC" id="5.4.2.11"/>
    </reaction>
</comment>
<comment type="pathway">
    <text evidence="1">Carbohydrate degradation; glycolysis; pyruvate from D-glyceraldehyde 3-phosphate: step 3/5.</text>
</comment>
<comment type="mass spectrometry" mass="26082.58" method="Electrospray" evidence="2"/>
<comment type="similarity">
    <text evidence="1">Belongs to the phosphoglycerate mutase family. BPG-dependent PGAM subfamily.</text>
</comment>
<keyword id="KW-0903">Direct protein sequencing</keyword>
<keyword id="KW-0312">Gluconeogenesis</keyword>
<keyword id="KW-0324">Glycolysis</keyword>
<keyword id="KW-0413">Isomerase</keyword>
<dbReference type="EC" id="5.4.2.11" evidence="1"/>
<dbReference type="EMBL" id="CP000003">
    <property type="protein sequence ID" value="AAT87325.1"/>
    <property type="molecule type" value="Genomic_DNA"/>
</dbReference>
<dbReference type="RefSeq" id="WP_002983928.1">
    <property type="nucleotide sequence ID" value="NC_006086.1"/>
</dbReference>
<dbReference type="SMR" id="Q5XB88"/>
<dbReference type="KEGG" id="spa:M6_Spy1190"/>
<dbReference type="HOGENOM" id="CLU_033323_1_5_9"/>
<dbReference type="UniPathway" id="UPA00109">
    <property type="reaction ID" value="UER00186"/>
</dbReference>
<dbReference type="Proteomes" id="UP000001167">
    <property type="component" value="Chromosome"/>
</dbReference>
<dbReference type="GO" id="GO:0004619">
    <property type="term" value="F:phosphoglycerate mutase activity"/>
    <property type="evidence" value="ECO:0007669"/>
    <property type="project" value="UniProtKB-EC"/>
</dbReference>
<dbReference type="GO" id="GO:0006094">
    <property type="term" value="P:gluconeogenesis"/>
    <property type="evidence" value="ECO:0007669"/>
    <property type="project" value="UniProtKB-UniRule"/>
</dbReference>
<dbReference type="GO" id="GO:0006096">
    <property type="term" value="P:glycolytic process"/>
    <property type="evidence" value="ECO:0007669"/>
    <property type="project" value="UniProtKB-UniRule"/>
</dbReference>
<dbReference type="CDD" id="cd07067">
    <property type="entry name" value="HP_PGM_like"/>
    <property type="match status" value="1"/>
</dbReference>
<dbReference type="FunFam" id="3.40.50.1240:FF:000003">
    <property type="entry name" value="2,3-bisphosphoglycerate-dependent phosphoglycerate mutase"/>
    <property type="match status" value="1"/>
</dbReference>
<dbReference type="Gene3D" id="3.40.50.1240">
    <property type="entry name" value="Phosphoglycerate mutase-like"/>
    <property type="match status" value="1"/>
</dbReference>
<dbReference type="HAMAP" id="MF_01039">
    <property type="entry name" value="PGAM_GpmA"/>
    <property type="match status" value="1"/>
</dbReference>
<dbReference type="InterPro" id="IPR013078">
    <property type="entry name" value="His_Pase_superF_clade-1"/>
</dbReference>
<dbReference type="InterPro" id="IPR029033">
    <property type="entry name" value="His_PPase_superfam"/>
</dbReference>
<dbReference type="InterPro" id="IPR005952">
    <property type="entry name" value="Phosphogly_mut1"/>
</dbReference>
<dbReference type="NCBIfam" id="TIGR01258">
    <property type="entry name" value="pgm_1"/>
    <property type="match status" value="1"/>
</dbReference>
<dbReference type="NCBIfam" id="NF010713">
    <property type="entry name" value="PRK14115.1"/>
    <property type="match status" value="1"/>
</dbReference>
<dbReference type="NCBIfam" id="NF010715">
    <property type="entry name" value="PRK14117.1"/>
    <property type="match status" value="1"/>
</dbReference>
<dbReference type="PANTHER" id="PTHR11931">
    <property type="entry name" value="PHOSPHOGLYCERATE MUTASE"/>
    <property type="match status" value="1"/>
</dbReference>
<dbReference type="Pfam" id="PF00300">
    <property type="entry name" value="His_Phos_1"/>
    <property type="match status" value="1"/>
</dbReference>
<dbReference type="PIRSF" id="PIRSF000709">
    <property type="entry name" value="6PFK_2-Ptase"/>
    <property type="match status" value="1"/>
</dbReference>
<dbReference type="SMART" id="SM00855">
    <property type="entry name" value="PGAM"/>
    <property type="match status" value="1"/>
</dbReference>
<dbReference type="SUPFAM" id="SSF53254">
    <property type="entry name" value="Phosphoglycerate mutase-like"/>
    <property type="match status" value="1"/>
</dbReference>
<accession>Q5XB88</accession>
<accession>P82574</accession>